<protein>
    <recommendedName>
        <fullName evidence="3">tRNA (cytidine/uridine/adenosine-2'-O-)-methyltransferase TrmJ</fullName>
        <ecNumber evidence="1">2.1.1.-</ecNumber>
        <ecNumber evidence="1">2.1.1.200</ecNumber>
    </recommendedName>
    <alternativeName>
        <fullName evidence="2">tRNA (cytidine(32)/uridine(32)/adenosine(32)-2'-O)-methyltransferase</fullName>
    </alternativeName>
    <alternativeName>
        <fullName evidence="2">tRNA Cm32/Um32/Am32 methyltransferase</fullName>
    </alternativeName>
</protein>
<evidence type="ECO:0000269" key="1">
    <source>
    </source>
</evidence>
<evidence type="ECO:0000303" key="2">
    <source>
    </source>
</evidence>
<evidence type="ECO:0000305" key="3"/>
<evidence type="ECO:0000305" key="4">
    <source>
    </source>
</evidence>
<evidence type="ECO:0000312" key="5">
    <source>
        <dbReference type="EMBL" id="ABJ13078.1"/>
    </source>
</evidence>
<evidence type="ECO:0007744" key="6">
    <source>
        <dbReference type="PDB" id="5GM8"/>
    </source>
</evidence>
<evidence type="ECO:0007744" key="7">
    <source>
        <dbReference type="PDB" id="5GMB"/>
    </source>
</evidence>
<evidence type="ECO:0007744" key="8">
    <source>
        <dbReference type="PDB" id="5GMC"/>
    </source>
</evidence>
<proteinExistence type="evidence at protein level"/>
<feature type="chain" id="PRO_0000445018" description="tRNA (cytidine/uridine/adenosine-2'-O-)-methyltransferase TrmJ">
    <location>
        <begin position="1"/>
        <end position="257"/>
    </location>
</feature>
<feature type="binding site" evidence="4">
    <location>
        <begin position="79"/>
        <end position="82"/>
    </location>
    <ligand>
        <name>S-adenosyl-L-methionine</name>
        <dbReference type="ChEBI" id="CHEBI:59789"/>
    </ligand>
</feature>
<feature type="binding site" evidence="4">
    <location>
        <begin position="115"/>
        <end position="117"/>
    </location>
    <ligand>
        <name>S-adenosyl-L-methionine</name>
        <dbReference type="ChEBI" id="CHEBI:59789"/>
    </ligand>
</feature>
<feature type="binding site" evidence="4">
    <location>
        <position position="135"/>
    </location>
    <ligand>
        <name>S-adenosyl-L-methionine</name>
        <dbReference type="ChEBI" id="CHEBI:59789"/>
    </ligand>
</feature>
<feature type="binding site" evidence="4">
    <location>
        <begin position="142"/>
        <end position="144"/>
    </location>
    <ligand>
        <name>S-adenosyl-L-methionine</name>
        <dbReference type="ChEBI" id="CHEBI:59789"/>
    </ligand>
</feature>
<gene>
    <name evidence="2" type="primary">trmJ</name>
    <name evidence="5" type="ordered locus">PA14_14690</name>
</gene>
<dbReference type="EC" id="2.1.1.-" evidence="1"/>
<dbReference type="EC" id="2.1.1.200" evidence="1"/>
<dbReference type="EMBL" id="CP000438">
    <property type="protein sequence ID" value="ABJ13078.1"/>
    <property type="molecule type" value="Genomic_DNA"/>
</dbReference>
<dbReference type="RefSeq" id="WP_003092842.1">
    <property type="nucleotide sequence ID" value="NZ_CP034244.1"/>
</dbReference>
<dbReference type="PDB" id="5GM8">
    <property type="method" value="X-ray"/>
    <property type="resolution" value="2.20 A"/>
    <property type="chains" value="A/B/C/D=1-167"/>
</dbReference>
<dbReference type="PDB" id="5GMB">
    <property type="method" value="X-ray"/>
    <property type="resolution" value="1.62 A"/>
    <property type="chains" value="A=1-167"/>
</dbReference>
<dbReference type="PDB" id="5GMC">
    <property type="method" value="X-ray"/>
    <property type="resolution" value="1.70 A"/>
    <property type="chains" value="A/B/C/D=1-167"/>
</dbReference>
<dbReference type="PDBsum" id="5GM8"/>
<dbReference type="PDBsum" id="5GMB"/>
<dbReference type="PDBsum" id="5GMC"/>
<dbReference type="SMR" id="A0A0H2ZF87"/>
<dbReference type="KEGG" id="pau:PA14_14690"/>
<dbReference type="HOGENOM" id="CLU_056931_0_1_6"/>
<dbReference type="BioCyc" id="PAER208963:G1G74-1205-MONOMER"/>
<dbReference type="BRENDA" id="2.1.1.200">
    <property type="organism ID" value="5087"/>
</dbReference>
<dbReference type="Proteomes" id="UP000000653">
    <property type="component" value="Chromosome"/>
</dbReference>
<dbReference type="GO" id="GO:0005829">
    <property type="term" value="C:cytosol"/>
    <property type="evidence" value="ECO:0007669"/>
    <property type="project" value="TreeGrafter"/>
</dbReference>
<dbReference type="GO" id="GO:0003723">
    <property type="term" value="F:RNA binding"/>
    <property type="evidence" value="ECO:0007669"/>
    <property type="project" value="InterPro"/>
</dbReference>
<dbReference type="GO" id="GO:0160206">
    <property type="term" value="F:tRNA (cytidine(32)/uridine(32)-2'-O)-methyltransferase activity"/>
    <property type="evidence" value="ECO:0007669"/>
    <property type="project" value="UniProtKB-EC"/>
</dbReference>
<dbReference type="GO" id="GO:0002128">
    <property type="term" value="P:tRNA nucleoside ribose methylation"/>
    <property type="evidence" value="ECO:0007669"/>
    <property type="project" value="TreeGrafter"/>
</dbReference>
<dbReference type="CDD" id="cd18093">
    <property type="entry name" value="SpoU-like_TrmJ"/>
    <property type="match status" value="1"/>
</dbReference>
<dbReference type="FunFam" id="1.10.8.590:FF:000004">
    <property type="entry name" value="tRNA (cytidine/uridine/adenosine-2'-O-)-methyltransferase TrmJ"/>
    <property type="match status" value="1"/>
</dbReference>
<dbReference type="FunFam" id="3.40.1280.10:FF:000006">
    <property type="entry name" value="Uncharacterized tRNA/rRNA methyltransferase HI_0380"/>
    <property type="match status" value="1"/>
</dbReference>
<dbReference type="Gene3D" id="1.10.8.590">
    <property type="match status" value="1"/>
</dbReference>
<dbReference type="Gene3D" id="3.40.1280.10">
    <property type="match status" value="1"/>
</dbReference>
<dbReference type="InterPro" id="IPR029028">
    <property type="entry name" value="Alpha/beta_knot_MTases"/>
</dbReference>
<dbReference type="InterPro" id="IPR004384">
    <property type="entry name" value="RNA_MeTrfase_TrmJ/LasT"/>
</dbReference>
<dbReference type="InterPro" id="IPR001537">
    <property type="entry name" value="SpoU_MeTrfase"/>
</dbReference>
<dbReference type="InterPro" id="IPR029026">
    <property type="entry name" value="tRNA_m1G_MTases_N"/>
</dbReference>
<dbReference type="NCBIfam" id="NF011694">
    <property type="entry name" value="PRK15114.1"/>
    <property type="match status" value="1"/>
</dbReference>
<dbReference type="NCBIfam" id="TIGR00050">
    <property type="entry name" value="rRNA_methyl_1"/>
    <property type="match status" value="1"/>
</dbReference>
<dbReference type="PANTHER" id="PTHR42786:SF2">
    <property type="entry name" value="TRNA (CYTIDINE_URIDINE-2'-O-)-METHYLTRANSFERASE TRMJ"/>
    <property type="match status" value="1"/>
</dbReference>
<dbReference type="PANTHER" id="PTHR42786">
    <property type="entry name" value="TRNA/RRNA METHYLTRANSFERASE"/>
    <property type="match status" value="1"/>
</dbReference>
<dbReference type="Pfam" id="PF00588">
    <property type="entry name" value="SpoU_methylase"/>
    <property type="match status" value="1"/>
</dbReference>
<dbReference type="PIRSF" id="PIRSF004808">
    <property type="entry name" value="LasT"/>
    <property type="match status" value="1"/>
</dbReference>
<dbReference type="SUPFAM" id="SSF75217">
    <property type="entry name" value="alpha/beta knot"/>
    <property type="match status" value="1"/>
</dbReference>
<organism>
    <name type="scientific">Pseudomonas aeruginosa (strain UCBPP-PA14)</name>
    <dbReference type="NCBI Taxonomy" id="208963"/>
    <lineage>
        <taxon>Bacteria</taxon>
        <taxon>Pseudomonadati</taxon>
        <taxon>Pseudomonadota</taxon>
        <taxon>Gammaproteobacteria</taxon>
        <taxon>Pseudomonadales</taxon>
        <taxon>Pseudomonadaceae</taxon>
        <taxon>Pseudomonas</taxon>
    </lineage>
</organism>
<keyword id="KW-0002">3D-structure</keyword>
<keyword id="KW-0963">Cytoplasm</keyword>
<keyword id="KW-0489">Methyltransferase</keyword>
<keyword id="KW-0949">S-adenosyl-L-methionine</keyword>
<keyword id="KW-0808">Transferase</keyword>
<keyword id="KW-0819">tRNA processing</keyword>
<sequence length="257" mass="28486">MLDRIRVVLVNTSHPGNIGGAARAMKNMGLSQLVLVQPESFPHGDAVARASGATDILDAARVVDTLEEALSGCSVVLGTSARDRRIPWPLLDPRECATTCLEHLEANGEVALVFGREYAGLTNEELQRCQFHVHIPSDPEFGSLNLAAAVQVLTYEVRMAWLAAQGKPTKMEKFESTSMLNTELVTADELELYYAHLERTLIDIGFLDPEKPRHLMSRLRRLYGRSAISKLEMNILRGILTETQKVARGLSYKRSDD</sequence>
<reference key="1">
    <citation type="journal article" date="2006" name="Genome Biol.">
        <title>Genomic analysis reveals that Pseudomonas aeruginosa virulence is combinatorial.</title>
        <authorList>
            <person name="Lee D.G."/>
            <person name="Urbach J.M."/>
            <person name="Wu G."/>
            <person name="Liberati N.T."/>
            <person name="Feinbaum R.L."/>
            <person name="Miyata S."/>
            <person name="Diggins L.T."/>
            <person name="He J."/>
            <person name="Saucier M."/>
            <person name="Deziel E."/>
            <person name="Friedman L."/>
            <person name="Li L."/>
            <person name="Grills G."/>
            <person name="Montgomery K."/>
            <person name="Kucherlapati R."/>
            <person name="Rahme L.G."/>
            <person name="Ausubel F.M."/>
        </authorList>
    </citation>
    <scope>NUCLEOTIDE SEQUENCE [LARGE SCALE GENOMIC DNA]</scope>
    <source>
        <strain>UCBPP-PA14</strain>
    </source>
</reference>
<reference evidence="6 7 8" key="2">
    <citation type="journal article" date="2016" name="Nucleic Acids Res.">
        <title>Methylation at position 32 of tRNA catalyzed by TrmJ alters oxidative stress response in Pseudomonas aeruginosa.</title>
        <authorList>
            <person name="Jaroensuk J."/>
            <person name="Atichartpongkul S."/>
            <person name="Chionh Y.H."/>
            <person name="Wong Y.H."/>
            <person name="Liew C.W."/>
            <person name="McBee M.E."/>
            <person name="Thongdee N."/>
            <person name="Prestwich E.G."/>
            <person name="DeMott M.S."/>
            <person name="Mongkolsuk S."/>
            <person name="Dedon P.C."/>
            <person name="Lescar J."/>
            <person name="Fuangthong M."/>
        </authorList>
    </citation>
    <scope>X-RAY CRYSTALLOGRAPHY (1.62 ANGSTROMS) OF 1-167 IN COMPLEX WITH SINEFUNGIN</scope>
    <scope>FUNCTION</scope>
    <scope>CATALYTIC ACTIVITY</scope>
    <scope>SUBUNIT</scope>
    <scope>DISRUPTION PHENOTYPE</scope>
    <source>
        <strain>UCBPP-PA14</strain>
    </source>
</reference>
<accession>A0A0H2ZF87</accession>
<name>TRMJ_PSEAB</name>
<comment type="function">
    <text evidence="1">Catalyzes the formation of 2'O-methylated cytidine (Cm32), 2'O-methylated uridine (Um32) or 2'O-methylated adenosine (Am32) at position 32 in tRNA. Confers resistance to oxidative stress.</text>
</comment>
<comment type="catalytic activity">
    <reaction evidence="1">
        <text>cytidine(32) in tRNA + S-adenosyl-L-methionine = 2'-O-methylcytidine(32) in tRNA + S-adenosyl-L-homocysteine + H(+)</text>
        <dbReference type="Rhea" id="RHEA:42932"/>
        <dbReference type="Rhea" id="RHEA-COMP:10288"/>
        <dbReference type="Rhea" id="RHEA-COMP:10289"/>
        <dbReference type="ChEBI" id="CHEBI:15378"/>
        <dbReference type="ChEBI" id="CHEBI:57856"/>
        <dbReference type="ChEBI" id="CHEBI:59789"/>
        <dbReference type="ChEBI" id="CHEBI:74495"/>
        <dbReference type="ChEBI" id="CHEBI:82748"/>
        <dbReference type="EC" id="2.1.1.200"/>
    </reaction>
</comment>
<comment type="catalytic activity">
    <reaction evidence="1">
        <text>uridine(32) in tRNA + S-adenosyl-L-methionine = 2'-O-methyluridine(32) in tRNA + S-adenosyl-L-homocysteine + H(+)</text>
        <dbReference type="Rhea" id="RHEA:42936"/>
        <dbReference type="Rhea" id="RHEA-COMP:10107"/>
        <dbReference type="Rhea" id="RHEA-COMP:10290"/>
        <dbReference type="ChEBI" id="CHEBI:15378"/>
        <dbReference type="ChEBI" id="CHEBI:57856"/>
        <dbReference type="ChEBI" id="CHEBI:59789"/>
        <dbReference type="ChEBI" id="CHEBI:65315"/>
        <dbReference type="ChEBI" id="CHEBI:74478"/>
        <dbReference type="EC" id="2.1.1.200"/>
    </reaction>
</comment>
<comment type="catalytic activity">
    <reaction evidence="1">
        <text>adenosine(32) in tRNA + S-adenosyl-L-methionine = 2'-O-methyladenosine(32) in tRNA + S-adenosyl-L-homocysteine + H(+)</text>
        <dbReference type="Rhea" id="RHEA:56884"/>
        <dbReference type="Rhea" id="RHEA-COMP:14778"/>
        <dbReference type="Rhea" id="RHEA-COMP:14779"/>
        <dbReference type="ChEBI" id="CHEBI:15378"/>
        <dbReference type="ChEBI" id="CHEBI:57856"/>
        <dbReference type="ChEBI" id="CHEBI:59789"/>
        <dbReference type="ChEBI" id="CHEBI:74411"/>
        <dbReference type="ChEBI" id="CHEBI:74477"/>
    </reaction>
</comment>
<comment type="subunit">
    <text evidence="1">Homodimer.</text>
</comment>
<comment type="subcellular location">
    <subcellularLocation>
        <location evidence="3">Cytoplasm</location>
    </subcellularLocation>
</comment>
<comment type="disruption phenotype">
    <text evidence="1">Inactivation of the gene abolishes Cm, Um and Am formation in tRNA. Mutant has increased sensitivity to hydrogen peroxide (H(2)O(2)), with reduced expression of oxyR-recG, katB-ankB, and katE.</text>
</comment>
<comment type="similarity">
    <text evidence="3">Belongs to the class IV-like SAM-binding methyltransferase superfamily. RNA methyltransferase TrmH family.</text>
</comment>